<dbReference type="EC" id="1.-.-.-" evidence="6"/>
<dbReference type="EMBL" id="GU574478">
    <property type="protein sequence ID" value="ADI24958.2"/>
    <property type="molecule type" value="Genomic_DNA"/>
</dbReference>
<dbReference type="SMR" id="D7PI20"/>
<dbReference type="GlyCosmos" id="D7PI20">
    <property type="glycosylation" value="2 sites, No reported glycans"/>
</dbReference>
<dbReference type="BioCyc" id="MetaCyc:MONOMER-19272"/>
<dbReference type="UniPathway" id="UPA00213"/>
<dbReference type="GO" id="GO:0020037">
    <property type="term" value="F:heme binding"/>
    <property type="evidence" value="ECO:0007669"/>
    <property type="project" value="InterPro"/>
</dbReference>
<dbReference type="GO" id="GO:0005506">
    <property type="term" value="F:iron ion binding"/>
    <property type="evidence" value="ECO:0007669"/>
    <property type="project" value="InterPro"/>
</dbReference>
<dbReference type="GO" id="GO:0004497">
    <property type="term" value="F:monooxygenase activity"/>
    <property type="evidence" value="ECO:0007669"/>
    <property type="project" value="UniProtKB-KW"/>
</dbReference>
<dbReference type="GO" id="GO:0016705">
    <property type="term" value="F:oxidoreductase activity, acting on paired donors, with incorporation or reduction of molecular oxygen"/>
    <property type="evidence" value="ECO:0007669"/>
    <property type="project" value="InterPro"/>
</dbReference>
<dbReference type="GO" id="GO:0140878">
    <property type="term" value="P:griseofulvin biosynthetic process"/>
    <property type="evidence" value="ECO:0000314"/>
    <property type="project" value="GO_Central"/>
</dbReference>
<dbReference type="GO" id="GO:0016114">
    <property type="term" value="P:terpenoid biosynthetic process"/>
    <property type="evidence" value="ECO:0007669"/>
    <property type="project" value="UniProtKB-UniPathway"/>
</dbReference>
<dbReference type="CDD" id="cd11060">
    <property type="entry name" value="CYP57A1-like"/>
    <property type="match status" value="1"/>
</dbReference>
<dbReference type="Gene3D" id="1.10.630.10">
    <property type="entry name" value="Cytochrome P450"/>
    <property type="match status" value="1"/>
</dbReference>
<dbReference type="InterPro" id="IPR001128">
    <property type="entry name" value="Cyt_P450"/>
</dbReference>
<dbReference type="InterPro" id="IPR017972">
    <property type="entry name" value="Cyt_P450_CS"/>
</dbReference>
<dbReference type="InterPro" id="IPR002401">
    <property type="entry name" value="Cyt_P450_E_grp-I"/>
</dbReference>
<dbReference type="InterPro" id="IPR036396">
    <property type="entry name" value="Cyt_P450_sf"/>
</dbReference>
<dbReference type="InterPro" id="IPR050121">
    <property type="entry name" value="Cytochrome_P450_monoxygenase"/>
</dbReference>
<dbReference type="PANTHER" id="PTHR24305">
    <property type="entry name" value="CYTOCHROME P450"/>
    <property type="match status" value="1"/>
</dbReference>
<dbReference type="PANTHER" id="PTHR24305:SF229">
    <property type="entry name" value="P450, PUTATIVE (EUROFUNG)-RELATED"/>
    <property type="match status" value="1"/>
</dbReference>
<dbReference type="Pfam" id="PF00067">
    <property type="entry name" value="p450"/>
    <property type="match status" value="1"/>
</dbReference>
<dbReference type="PRINTS" id="PR00463">
    <property type="entry name" value="EP450I"/>
</dbReference>
<dbReference type="PRINTS" id="PR00385">
    <property type="entry name" value="P450"/>
</dbReference>
<dbReference type="SUPFAM" id="SSF48264">
    <property type="entry name" value="Cytochrome P450"/>
    <property type="match status" value="1"/>
</dbReference>
<dbReference type="PROSITE" id="PS00086">
    <property type="entry name" value="CYTOCHROME_P450"/>
    <property type="match status" value="1"/>
</dbReference>
<protein>
    <recommendedName>
        <fullName evidence="8">Cytochrome P450 monooxygenase gsfF</fullName>
        <ecNumber evidence="6">1.-.-.-</ecNumber>
    </recommendedName>
    <alternativeName>
        <fullName evidence="8">Griseofulvin synthesis protein F</fullName>
    </alternativeName>
</protein>
<reference key="1">
    <citation type="journal article" date="2010" name="Chem. Biol.">
        <title>Identification of the viridicatumtoxin and griseofulvin gene clusters from Penicillium aethiopicum.</title>
        <authorList>
            <person name="Chooi Y.H."/>
            <person name="Cacho R."/>
            <person name="Tang Y."/>
        </authorList>
    </citation>
    <scope>NUCLEOTIDE SEQUENCE [GENOMIC DNA]</scope>
    <scope>FUNCTION</scope>
    <source>
        <strain>IBT 5753</strain>
    </source>
</reference>
<reference key="2">
    <citation type="journal article" date="1958" name="Nature">
        <title>Experimental ringworm in guinea pigs: oral treatment with griseofulvin.</title>
        <authorList>
            <person name="Gentles J.C."/>
        </authorList>
    </citation>
    <scope>BIOTECHNOLOGY</scope>
</reference>
<reference key="3">
    <citation type="journal article" date="1973" name="Nature">
        <title>Griseofulvin inhibits fungal mitosis.</title>
        <authorList>
            <person name="Gull K."/>
            <person name="Trinci A.P."/>
        </authorList>
    </citation>
    <scope>BIOTECHNOLOGY</scope>
</reference>
<reference key="4">
    <citation type="journal article" date="2013" name="ACS Chem. Biol.">
        <title>Complexity generation in fungal polyketide biosynthesis: a spirocycle-forming P450 in the concise pathway to the antifungal drug griseofulvin.</title>
        <authorList>
            <person name="Cacho R.A."/>
            <person name="Chooi Y.H."/>
            <person name="Zhou H."/>
            <person name="Tang Y."/>
        </authorList>
    </citation>
    <scope>FUNCTION</scope>
    <scope>DISRUPTION PHENOTYPE</scope>
    <scope>CATALYTIC ACTIVITY</scope>
</reference>
<keyword id="KW-0325">Glycoprotein</keyword>
<keyword id="KW-0349">Heme</keyword>
<keyword id="KW-0408">Iron</keyword>
<keyword id="KW-0479">Metal-binding</keyword>
<keyword id="KW-0503">Monooxygenase</keyword>
<keyword id="KW-0560">Oxidoreductase</keyword>
<keyword id="KW-0732">Signal</keyword>
<name>GSFF_PENAE</name>
<gene>
    <name evidence="8" type="primary">gsfF</name>
</gene>
<comment type="function">
    <text evidence="5 6">Cytochrome P450 monooxygenase; part of the gene cluster that mediates the biosynthesis of griseofulvin, an important antifungal drug that has been in use for a long time for treating dermatophyte infections (PubMed:20534346, PubMed:23978092). The first step of the pathway is the formation of the heptaketide backbone by gsfA which is initiated by priming with acetyl-CoA, followed by sequential condensations of 6 malonyl-CoA units (PubMed:20534346, PubMed:23978092). The resulting benzophenone can undergo a spontaneous dehydration to form norlichexanthone (PubMed:23978092). However, the true precursor for the griseofulvin biosynthesis is not norlichexanthone, but the heptaketide benzophenone that is O-methylated at 3-OH by gsfB to produce griseophenone D which is further methylated at 9-OH by gsfC to yield griseophenone C (PubMed:23978092). Griseophenone C is then substrate of halogenase gsfI which is responsible for the regio-specific chlorination at the C13 position to form griseophenone B (PubMed:23978092). The cytochrome P450 gsfF catalyzes the coupling of orcinol and phloroglucinol rings in griseophenone B to form desmethyl-dehydrogriseofulvin A which is further methylated at 5-OH by gsfD to yield dehydrogriseofulvin (PubMed:23978092). Finally, gsfE performs stereospecific reduction of enone 18 of dehydrogriseofulvin to afford the final product griseofulvin (PubMed:23978092).</text>
</comment>
<comment type="catalytic activity">
    <reaction evidence="6">
        <text>griseophenone B + reduced [NADPH--hemoprotein reductase] + O2 + H(+) = desmethyl-dehydrogriseofulvin + oxidized [NADPH--hemoprotein reductase] + 2 H2O</text>
        <dbReference type="Rhea" id="RHEA:73935"/>
        <dbReference type="Rhea" id="RHEA-COMP:11964"/>
        <dbReference type="Rhea" id="RHEA-COMP:11965"/>
        <dbReference type="ChEBI" id="CHEBI:15377"/>
        <dbReference type="ChEBI" id="CHEBI:15378"/>
        <dbReference type="ChEBI" id="CHEBI:15379"/>
        <dbReference type="ChEBI" id="CHEBI:57618"/>
        <dbReference type="ChEBI" id="CHEBI:58210"/>
        <dbReference type="ChEBI" id="CHEBI:193066"/>
        <dbReference type="ChEBI" id="CHEBI:193067"/>
    </reaction>
    <physiologicalReaction direction="left-to-right" evidence="6">
        <dbReference type="Rhea" id="RHEA:73936"/>
    </physiologicalReaction>
</comment>
<comment type="cofactor">
    <cofactor evidence="1">
        <name>heme</name>
        <dbReference type="ChEBI" id="CHEBI:30413"/>
    </cofactor>
</comment>
<comment type="pathway">
    <text evidence="5 6">Secondary metabolite biosynthesis; terpenoid biosynthesis.</text>
</comment>
<comment type="disruption phenotype">
    <text evidence="6">Impairs the production of griseofulvin, but accumulates the intermediates griseophenone C, monochlorinated griseophenone G and dichlorinated griseophenone G (PubMed:23978092).</text>
</comment>
<comment type="biotechnology">
    <text evidence="4 7">Griseofulvin is a spirocyclic fungal natural product used in treatment of fungal dermatophytes (PubMed:13577889, PubMed:4583105).</text>
</comment>
<comment type="similarity">
    <text evidence="9">Belongs to the cytochrome P450 family.</text>
</comment>
<accession>D7PI20</accession>
<feature type="signal peptide" evidence="2">
    <location>
        <begin position="1"/>
        <end position="16"/>
    </location>
</feature>
<feature type="chain" id="PRO_0000436726" description="Cytochrome P450 monooxygenase gsfF" evidence="2">
    <location>
        <begin position="17"/>
        <end position="504"/>
    </location>
</feature>
<feature type="binding site" description="axial binding residue" evidence="1">
    <location>
        <position position="450"/>
    </location>
    <ligand>
        <name>heme</name>
        <dbReference type="ChEBI" id="CHEBI:30413"/>
    </ligand>
    <ligandPart>
        <name>Fe</name>
        <dbReference type="ChEBI" id="CHEBI:18248"/>
    </ligandPart>
</feature>
<feature type="glycosylation site" description="N-linked (GlcNAc...) asparagine" evidence="3">
    <location>
        <position position="97"/>
    </location>
</feature>
<feature type="glycosylation site" description="N-linked (GlcNAc...) asparagine" evidence="3">
    <location>
        <position position="150"/>
    </location>
</feature>
<evidence type="ECO:0000250" key="1">
    <source>
        <dbReference type="UniProtKB" id="P04798"/>
    </source>
</evidence>
<evidence type="ECO:0000255" key="2"/>
<evidence type="ECO:0000255" key="3">
    <source>
        <dbReference type="PROSITE-ProRule" id="PRU00498"/>
    </source>
</evidence>
<evidence type="ECO:0000269" key="4">
    <source>
    </source>
</evidence>
<evidence type="ECO:0000269" key="5">
    <source>
    </source>
</evidence>
<evidence type="ECO:0000269" key="6">
    <source>
    </source>
</evidence>
<evidence type="ECO:0000269" key="7">
    <source>
    </source>
</evidence>
<evidence type="ECO:0000303" key="8">
    <source>
    </source>
</evidence>
<evidence type="ECO:0000305" key="9"/>
<sequence length="504" mass="56439">MTVLFILSAGLVAVFGYLVSWFIYCRTLHPLSKVPGPFWPSVTRLWLTYAVSRGELDVVQRDLHRRYGPLVRIAPDEIACADPEAIRKIYSTTSPLNKSDFYHIWDVGAFSKYPNAFAIVDENMHFERRRIVSSVYSMSTVLTLEPYIDNCSRLFVKRMTERTVPHEAIDLGDWFLWYAYDVIGELFFGHSLGFIENRGDEGGFLASLEVMLPVLTIAAASSPLVRGLIMGLFTLSSTARKGLKGMNHIIETARASVDKRASAVAEPGKGERKDLLHNLLNIVSSKGDKLDFGIEDVKNEAFAALTAGADATMIELQAIFYYLVKDRSVYEELRKEVDQAVETGKLSEFPSYSEVVQLPLLKATIKEALRLHPAVGFTMPRVVGQAGIELLGMYIPPGWKVGMNAAVVGRDEGVYGTDANTFRPERWIERTDSDMDRCNNLVFGAGTRTCIGKQIALSEIYKMVPLLIRKFDFALVDPSKSWTTHDYFFNKQSGVQVKVTVRGL</sequence>
<organism>
    <name type="scientific">Penicillium aethiopicum</name>
    <dbReference type="NCBI Taxonomy" id="36650"/>
    <lineage>
        <taxon>Eukaryota</taxon>
        <taxon>Fungi</taxon>
        <taxon>Dikarya</taxon>
        <taxon>Ascomycota</taxon>
        <taxon>Pezizomycotina</taxon>
        <taxon>Eurotiomycetes</taxon>
        <taxon>Eurotiomycetidae</taxon>
        <taxon>Eurotiales</taxon>
        <taxon>Aspergillaceae</taxon>
        <taxon>Penicillium</taxon>
    </lineage>
</organism>
<proteinExistence type="evidence at protein level"/>